<name>Y1031_HALH5</name>
<proteinExistence type="inferred from homology"/>
<dbReference type="EMBL" id="BA000004">
    <property type="protein sequence ID" value="BAB04750.1"/>
    <property type="molecule type" value="Genomic_DNA"/>
</dbReference>
<dbReference type="PIR" id="G83778">
    <property type="entry name" value="G83778"/>
</dbReference>
<dbReference type="RefSeq" id="WP_010897201.1">
    <property type="nucleotide sequence ID" value="NC_002570.2"/>
</dbReference>
<dbReference type="SMR" id="Q9KE27"/>
<dbReference type="STRING" id="272558.gene:10726925"/>
<dbReference type="GeneID" id="87596664"/>
<dbReference type="KEGG" id="bha:BH1031"/>
<dbReference type="eggNOG" id="COG2718">
    <property type="taxonomic scope" value="Bacteria"/>
</dbReference>
<dbReference type="HOGENOM" id="CLU_049702_2_0_9"/>
<dbReference type="OrthoDB" id="9788289at2"/>
<dbReference type="Proteomes" id="UP000001258">
    <property type="component" value="Chromosome"/>
</dbReference>
<dbReference type="HAMAP" id="MF_01232">
    <property type="entry name" value="UPF0229"/>
    <property type="match status" value="1"/>
</dbReference>
<dbReference type="InterPro" id="IPR014230">
    <property type="entry name" value="Spore_YhbH"/>
</dbReference>
<dbReference type="InterPro" id="IPR006698">
    <property type="entry name" value="UPF0229"/>
</dbReference>
<dbReference type="NCBIfam" id="TIGR02877">
    <property type="entry name" value="spore_yhbH"/>
    <property type="match status" value="1"/>
</dbReference>
<dbReference type="PANTHER" id="PTHR30510">
    <property type="entry name" value="UPF0229 PROTEIN YEAH"/>
    <property type="match status" value="1"/>
</dbReference>
<dbReference type="PANTHER" id="PTHR30510:SF2">
    <property type="entry name" value="UPF0229 PROTEIN YEAH"/>
    <property type="match status" value="1"/>
</dbReference>
<dbReference type="Pfam" id="PF04285">
    <property type="entry name" value="DUF444"/>
    <property type="match status" value="2"/>
</dbReference>
<feature type="chain" id="PRO_0000068190" description="UPF0229 protein BH1031">
    <location>
        <begin position="1"/>
        <end position="388"/>
    </location>
</feature>
<feature type="region of interest" description="Disordered" evidence="2">
    <location>
        <begin position="80"/>
        <end position="117"/>
    </location>
</feature>
<feature type="compositionally biased region" description="Gly residues" evidence="2">
    <location>
        <begin position="103"/>
        <end position="113"/>
    </location>
</feature>
<comment type="similarity">
    <text evidence="1">Belongs to the UPF0229 family.</text>
</comment>
<sequence>MKKGSRHNFVVSQENWTLHRKGYQDQRRHQEKVKEAIRKNLPDLVSEENIIMSNGREVIKIPIRSLDEYKIRYNYDKNKHVGQGDGDSQVGDVIARDPSAGQQGPGKGQGAGDQPGEDYFEAEVSILELEELLFRELELPNLQQKEEDHLVVEHIEFNDIRKKGLMGNIDKRRTILSAIKRNALEGRPGLIPIYNDDLRFKTWNEVVRPESKAVVLAMMDTSGSMGRWEKYMARSFFFWMTRFLRTKYETVDIEFIAHHTEAKVVSEEDFFSKGESGGTICSSAYRKALELINEKYDPARYNIYPFHFSDGDNLTSDNARCLKLVHELMESSSMFGYGEVNQYSRHSTLMNAYKNLKDPRFRSYVLKEKGDVYRAMKTFFKKEEEAVS</sequence>
<accession>Q9KE27</accession>
<organism>
    <name type="scientific">Halalkalibacterium halodurans (strain ATCC BAA-125 / DSM 18197 / FERM 7344 / JCM 9153 / C-125)</name>
    <name type="common">Bacillus halodurans</name>
    <dbReference type="NCBI Taxonomy" id="272558"/>
    <lineage>
        <taxon>Bacteria</taxon>
        <taxon>Bacillati</taxon>
        <taxon>Bacillota</taxon>
        <taxon>Bacilli</taxon>
        <taxon>Bacillales</taxon>
        <taxon>Bacillaceae</taxon>
        <taxon>Halalkalibacterium (ex Joshi et al. 2022)</taxon>
    </lineage>
</organism>
<keyword id="KW-1185">Reference proteome</keyword>
<reference key="1">
    <citation type="journal article" date="2000" name="Nucleic Acids Res.">
        <title>Complete genome sequence of the alkaliphilic bacterium Bacillus halodurans and genomic sequence comparison with Bacillus subtilis.</title>
        <authorList>
            <person name="Takami H."/>
            <person name="Nakasone K."/>
            <person name="Takaki Y."/>
            <person name="Maeno G."/>
            <person name="Sasaki R."/>
            <person name="Masui N."/>
            <person name="Fuji F."/>
            <person name="Hirama C."/>
            <person name="Nakamura Y."/>
            <person name="Ogasawara N."/>
            <person name="Kuhara S."/>
            <person name="Horikoshi K."/>
        </authorList>
    </citation>
    <scope>NUCLEOTIDE SEQUENCE [LARGE SCALE GENOMIC DNA]</scope>
    <source>
        <strain>ATCC BAA-125 / DSM 18197 / FERM 7344 / JCM 9153 / C-125</strain>
    </source>
</reference>
<gene>
    <name type="ordered locus">BH1031</name>
</gene>
<evidence type="ECO:0000255" key="1">
    <source>
        <dbReference type="HAMAP-Rule" id="MF_01232"/>
    </source>
</evidence>
<evidence type="ECO:0000256" key="2">
    <source>
        <dbReference type="SAM" id="MobiDB-lite"/>
    </source>
</evidence>
<protein>
    <recommendedName>
        <fullName evidence="1">UPF0229 protein BH1031</fullName>
    </recommendedName>
</protein>